<sequence length="44" mass="5168">MKRTYQPSKIVRKRRHGFRARMATTGGRKVLAARRTRGRKRLSA</sequence>
<comment type="similarity">
    <text evidence="1">Belongs to the bacterial ribosomal protein bL34 family.</text>
</comment>
<dbReference type="EMBL" id="AM040265">
    <property type="protein sequence ID" value="CAJ13150.1"/>
    <property type="molecule type" value="Genomic_DNA"/>
</dbReference>
<dbReference type="RefSeq" id="WP_002965629.1">
    <property type="nucleotide sequence ID" value="NZ_KN046823.1"/>
</dbReference>
<dbReference type="SMR" id="Q2YJR4"/>
<dbReference type="STRING" id="359391.BAB2_0984"/>
<dbReference type="GeneID" id="97534928"/>
<dbReference type="KEGG" id="bmf:BAB2_0984"/>
<dbReference type="HOGENOM" id="CLU_129938_2_0_5"/>
<dbReference type="Proteomes" id="UP000002719">
    <property type="component" value="Chromosome II"/>
</dbReference>
<dbReference type="GO" id="GO:1990904">
    <property type="term" value="C:ribonucleoprotein complex"/>
    <property type="evidence" value="ECO:0007669"/>
    <property type="project" value="UniProtKB-KW"/>
</dbReference>
<dbReference type="GO" id="GO:0005840">
    <property type="term" value="C:ribosome"/>
    <property type="evidence" value="ECO:0007669"/>
    <property type="project" value="UniProtKB-KW"/>
</dbReference>
<dbReference type="GO" id="GO:0003735">
    <property type="term" value="F:structural constituent of ribosome"/>
    <property type="evidence" value="ECO:0007669"/>
    <property type="project" value="InterPro"/>
</dbReference>
<dbReference type="GO" id="GO:0006412">
    <property type="term" value="P:translation"/>
    <property type="evidence" value="ECO:0007669"/>
    <property type="project" value="UniProtKB-UniRule"/>
</dbReference>
<dbReference type="FunFam" id="1.10.287.3980:FF:000001">
    <property type="entry name" value="Mitochondrial ribosomal protein L34"/>
    <property type="match status" value="1"/>
</dbReference>
<dbReference type="Gene3D" id="1.10.287.3980">
    <property type="match status" value="1"/>
</dbReference>
<dbReference type="HAMAP" id="MF_00391">
    <property type="entry name" value="Ribosomal_bL34"/>
    <property type="match status" value="1"/>
</dbReference>
<dbReference type="InterPro" id="IPR000271">
    <property type="entry name" value="Ribosomal_bL34"/>
</dbReference>
<dbReference type="InterPro" id="IPR020939">
    <property type="entry name" value="Ribosomal_bL34_CS"/>
</dbReference>
<dbReference type="NCBIfam" id="TIGR01030">
    <property type="entry name" value="rpmH_bact"/>
    <property type="match status" value="1"/>
</dbReference>
<dbReference type="PANTHER" id="PTHR14503:SF4">
    <property type="entry name" value="LARGE RIBOSOMAL SUBUNIT PROTEIN BL34M"/>
    <property type="match status" value="1"/>
</dbReference>
<dbReference type="PANTHER" id="PTHR14503">
    <property type="entry name" value="MITOCHONDRIAL RIBOSOMAL PROTEIN 34 FAMILY MEMBER"/>
    <property type="match status" value="1"/>
</dbReference>
<dbReference type="Pfam" id="PF00468">
    <property type="entry name" value="Ribosomal_L34"/>
    <property type="match status" value="1"/>
</dbReference>
<dbReference type="PROSITE" id="PS00784">
    <property type="entry name" value="RIBOSOMAL_L34"/>
    <property type="match status" value="1"/>
</dbReference>
<proteinExistence type="inferred from homology"/>
<accession>Q2YJR4</accession>
<evidence type="ECO:0000255" key="1">
    <source>
        <dbReference type="HAMAP-Rule" id="MF_00391"/>
    </source>
</evidence>
<evidence type="ECO:0000305" key="2"/>
<gene>
    <name evidence="1" type="primary">rpmH</name>
    <name type="ordered locus">BAB2_0984</name>
</gene>
<feature type="chain" id="PRO_1000013290" description="Large ribosomal subunit protein bL34">
    <location>
        <begin position="1"/>
        <end position="44"/>
    </location>
</feature>
<organism>
    <name type="scientific">Brucella abortus (strain 2308)</name>
    <dbReference type="NCBI Taxonomy" id="359391"/>
    <lineage>
        <taxon>Bacteria</taxon>
        <taxon>Pseudomonadati</taxon>
        <taxon>Pseudomonadota</taxon>
        <taxon>Alphaproteobacteria</taxon>
        <taxon>Hyphomicrobiales</taxon>
        <taxon>Brucellaceae</taxon>
        <taxon>Brucella/Ochrobactrum group</taxon>
        <taxon>Brucella</taxon>
    </lineage>
</organism>
<protein>
    <recommendedName>
        <fullName evidence="1">Large ribosomal subunit protein bL34</fullName>
    </recommendedName>
    <alternativeName>
        <fullName evidence="2">50S ribosomal protein L34</fullName>
    </alternativeName>
</protein>
<name>RL34_BRUA2</name>
<keyword id="KW-1185">Reference proteome</keyword>
<keyword id="KW-0687">Ribonucleoprotein</keyword>
<keyword id="KW-0689">Ribosomal protein</keyword>
<reference key="1">
    <citation type="journal article" date="2005" name="Infect. Immun.">
        <title>Whole-genome analyses of speciation events in pathogenic Brucellae.</title>
        <authorList>
            <person name="Chain P.S."/>
            <person name="Comerci D.J."/>
            <person name="Tolmasky M.E."/>
            <person name="Larimer F.W."/>
            <person name="Malfatti S.A."/>
            <person name="Vergez L.M."/>
            <person name="Aguero F."/>
            <person name="Land M.L."/>
            <person name="Ugalde R.A."/>
            <person name="Garcia E."/>
        </authorList>
    </citation>
    <scope>NUCLEOTIDE SEQUENCE [LARGE SCALE GENOMIC DNA]</scope>
    <source>
        <strain>2308</strain>
    </source>
</reference>